<sequence length="206" mass="22384">MSVLGVGPRTVTPHLRKGMMESSSGISLARAEAFLRLFAILVLVLTACLLGFDTQTKLLFSTIKKTATFRDLGALQVVVYVDSVAAGYNLLQLGRGFISAKLKGKLINVSYVTLPWVCFLLDQAAVYTVFSANTAALQASIIAVTGESSLQWMKVCNRYTRFCIQVGGALLSGYLASLLMVLLSSLSAFSLFRLYSPKQFHLLKPT</sequence>
<keyword id="KW-1003">Cell membrane</keyword>
<keyword id="KW-0472">Membrane</keyword>
<keyword id="KW-1185">Reference proteome</keyword>
<keyword id="KW-0812">Transmembrane</keyword>
<keyword id="KW-1133">Transmembrane helix</keyword>
<gene>
    <name type="ordered locus">VIT_11s0052g01140</name>
    <name type="ORF">GSVIVT00031388001</name>
    <name type="ORF">GSVIVT01029179001</name>
    <name type="ORF">VIT_00029179001</name>
    <name type="ORF">Vv11s0052g01140</name>
</gene>
<name>CSPL9_VITVI</name>
<reference key="1">
    <citation type="journal article" date="2007" name="Nature">
        <title>The grapevine genome sequence suggests ancestral hexaploidization in major angiosperm phyla.</title>
        <authorList>
            <person name="Jaillon O."/>
            <person name="Aury J.-M."/>
            <person name="Noel B."/>
            <person name="Policriti A."/>
            <person name="Clepet C."/>
            <person name="Casagrande A."/>
            <person name="Choisne N."/>
            <person name="Aubourg S."/>
            <person name="Vitulo N."/>
            <person name="Jubin C."/>
            <person name="Vezzi A."/>
            <person name="Legeai F."/>
            <person name="Hugueney P."/>
            <person name="Dasilva C."/>
            <person name="Horner D."/>
            <person name="Mica E."/>
            <person name="Jublot D."/>
            <person name="Poulain J."/>
            <person name="Bruyere C."/>
            <person name="Billault A."/>
            <person name="Segurens B."/>
            <person name="Gouyvenoux M."/>
            <person name="Ugarte E."/>
            <person name="Cattonaro F."/>
            <person name="Anthouard V."/>
            <person name="Vico V."/>
            <person name="Del Fabbro C."/>
            <person name="Alaux M."/>
            <person name="Di Gaspero G."/>
            <person name="Dumas V."/>
            <person name="Felice N."/>
            <person name="Paillard S."/>
            <person name="Juman I."/>
            <person name="Moroldo M."/>
            <person name="Scalabrin S."/>
            <person name="Canaguier A."/>
            <person name="Le Clainche I."/>
            <person name="Malacrida G."/>
            <person name="Durand E."/>
            <person name="Pesole G."/>
            <person name="Laucou V."/>
            <person name="Chatelet P."/>
            <person name="Merdinoglu D."/>
            <person name="Delledonne M."/>
            <person name="Pezzotti M."/>
            <person name="Lecharny A."/>
            <person name="Scarpelli C."/>
            <person name="Artiguenave F."/>
            <person name="Pe M.E."/>
            <person name="Valle G."/>
            <person name="Morgante M."/>
            <person name="Caboche M."/>
            <person name="Adam-Blondon A.-F."/>
            <person name="Weissenbach J."/>
            <person name="Quetier F."/>
            <person name="Wincker P."/>
        </authorList>
    </citation>
    <scope>NUCLEOTIDE SEQUENCE [LARGE SCALE GENOMIC DNA]</scope>
    <source>
        <strain>cv. Pinot noir / PN40024</strain>
    </source>
</reference>
<reference key="2">
    <citation type="submission" date="2006-07" db="EMBL/GenBank/DDBJ databases">
        <title>EST sequences from Thompson-seedless and Carmenere.</title>
        <authorList>
            <person name="Pena-Cortes H."/>
            <person name="Cuadros A."/>
            <person name="Ramirez I."/>
            <person name="Dorta F."/>
            <person name="Pinto M."/>
            <person name="Riquelme A."/>
            <person name="Fichet T."/>
            <person name="Prieto H."/>
            <person name="Rosales M."/>
            <person name="Hinrichsen P."/>
            <person name="Gonzalez E."/>
            <person name="Poblete F."/>
            <person name="Ruiz S."/>
        </authorList>
    </citation>
    <scope>NUCLEOTIDE SEQUENCE [LARGE SCALE MRNA] OF 14-206</scope>
    <source>
        <strain>cv. Thompson</strain>
        <tissue>Flower</tissue>
    </source>
</reference>
<reference key="3">
    <citation type="journal article" date="2014" name="Plant Physiol.">
        <title>Functional and evolutionary analysis of the CASPARIAN STRIP MEMBRANE DOMAIN PROTEIN family.</title>
        <authorList>
            <person name="Roppolo D."/>
            <person name="Boeckmann B."/>
            <person name="Pfister A."/>
            <person name="Boutet E."/>
            <person name="Rubio M.C."/>
            <person name="Denervaud-Tendon V."/>
            <person name="Vermeer J.E."/>
            <person name="Gheyselinck J."/>
            <person name="Xenarios I."/>
            <person name="Geldner N."/>
        </authorList>
    </citation>
    <scope>GENE FAMILY</scope>
    <scope>NOMENCLATURE</scope>
</reference>
<comment type="subunit">
    <text evidence="1">Homodimer and heterodimers.</text>
</comment>
<comment type="subcellular location">
    <subcellularLocation>
        <location evidence="1">Cell membrane</location>
        <topology evidence="1">Multi-pass membrane protein</topology>
    </subcellularLocation>
</comment>
<comment type="similarity">
    <text evidence="3">Belongs to the Casparian strip membrane proteins (CASP) family.</text>
</comment>
<comment type="sequence caution" evidence="3">
    <conflict type="erroneous gene model prediction">
        <sequence resource="EMBL-CDS" id="CCB44637"/>
    </conflict>
</comment>
<dbReference type="EMBL" id="FN594964">
    <property type="protein sequence ID" value="CCB44637.1"/>
    <property type="status" value="ALT_SEQ"/>
    <property type="molecule type" value="Genomic_DNA"/>
</dbReference>
<dbReference type="EMBL" id="EE108821">
    <property type="status" value="NOT_ANNOTATED_CDS"/>
    <property type="molecule type" value="mRNA"/>
</dbReference>
<dbReference type="RefSeq" id="XP_002273403.2">
    <property type="nucleotide sequence ID" value="XM_002273367.4"/>
</dbReference>
<dbReference type="SMR" id="A7Q6G6"/>
<dbReference type="FunCoup" id="A7Q6G6">
    <property type="interactions" value="84"/>
</dbReference>
<dbReference type="PaxDb" id="29760-VIT_11s0052g01140.t01"/>
<dbReference type="EnsemblPlants" id="Vitvi11g01671_t001">
    <property type="protein sequence ID" value="Vitvi11g01671_P001"/>
    <property type="gene ID" value="Vitvi11g01671"/>
</dbReference>
<dbReference type="Gramene" id="Vitvi11g01671_t001">
    <property type="protein sequence ID" value="Vitvi11g01671_P001"/>
    <property type="gene ID" value="Vitvi11g01671"/>
</dbReference>
<dbReference type="eggNOG" id="ENOG502S20T">
    <property type="taxonomic scope" value="Eukaryota"/>
</dbReference>
<dbReference type="InParanoid" id="A7Q6G6"/>
<dbReference type="OrthoDB" id="689315at2759"/>
<dbReference type="Proteomes" id="UP000009183">
    <property type="component" value="Chromosome 11"/>
</dbReference>
<dbReference type="ExpressionAtlas" id="A7Q6G6">
    <property type="expression patterns" value="baseline and differential"/>
</dbReference>
<dbReference type="GO" id="GO:0005886">
    <property type="term" value="C:plasma membrane"/>
    <property type="evidence" value="ECO:0007669"/>
    <property type="project" value="UniProtKB-SubCell"/>
</dbReference>
<dbReference type="InterPro" id="IPR006459">
    <property type="entry name" value="CASP/CASPL"/>
</dbReference>
<dbReference type="InterPro" id="IPR006702">
    <property type="entry name" value="CASP_dom"/>
</dbReference>
<dbReference type="NCBIfam" id="TIGR01569">
    <property type="entry name" value="A_tha_TIGR01569"/>
    <property type="match status" value="1"/>
</dbReference>
<dbReference type="PANTHER" id="PTHR33573:SF30">
    <property type="entry name" value="CASP-LIKE PROTEIN 2C1-RELATED"/>
    <property type="match status" value="1"/>
</dbReference>
<dbReference type="PANTHER" id="PTHR33573">
    <property type="entry name" value="CASP-LIKE PROTEIN 4A4"/>
    <property type="match status" value="1"/>
</dbReference>
<dbReference type="Pfam" id="PF04535">
    <property type="entry name" value="CASP_dom"/>
    <property type="match status" value="1"/>
</dbReference>
<protein>
    <recommendedName>
        <fullName>CASP-like protein 2C1</fullName>
        <shortName>VvCASPL2C1</shortName>
    </recommendedName>
</protein>
<organism>
    <name type="scientific">Vitis vinifera</name>
    <name type="common">Grape</name>
    <dbReference type="NCBI Taxonomy" id="29760"/>
    <lineage>
        <taxon>Eukaryota</taxon>
        <taxon>Viridiplantae</taxon>
        <taxon>Streptophyta</taxon>
        <taxon>Embryophyta</taxon>
        <taxon>Tracheophyta</taxon>
        <taxon>Spermatophyta</taxon>
        <taxon>Magnoliopsida</taxon>
        <taxon>eudicotyledons</taxon>
        <taxon>Gunneridae</taxon>
        <taxon>Pentapetalae</taxon>
        <taxon>rosids</taxon>
        <taxon>Vitales</taxon>
        <taxon>Vitaceae</taxon>
        <taxon>Viteae</taxon>
        <taxon>Vitis</taxon>
    </lineage>
</organism>
<feature type="chain" id="PRO_0000370314" description="CASP-like protein 2C1">
    <location>
        <begin position="1"/>
        <end position="206"/>
    </location>
</feature>
<feature type="topological domain" description="Cytoplasmic" evidence="2">
    <location>
        <begin position="1"/>
        <end position="31"/>
    </location>
</feature>
<feature type="transmembrane region" description="Helical" evidence="2">
    <location>
        <begin position="32"/>
        <end position="52"/>
    </location>
</feature>
<feature type="topological domain" description="Extracellular" evidence="2">
    <location>
        <begin position="53"/>
        <end position="71"/>
    </location>
</feature>
<feature type="transmembrane region" description="Helical" evidence="2">
    <location>
        <begin position="72"/>
        <end position="92"/>
    </location>
</feature>
<feature type="topological domain" description="Cytoplasmic" evidence="2">
    <location>
        <begin position="93"/>
        <end position="111"/>
    </location>
</feature>
<feature type="transmembrane region" description="Helical" evidence="2">
    <location>
        <begin position="112"/>
        <end position="132"/>
    </location>
</feature>
<feature type="topological domain" description="Extracellular" evidence="2">
    <location>
        <begin position="133"/>
        <end position="161"/>
    </location>
</feature>
<feature type="transmembrane region" description="Helical" evidence="2">
    <location>
        <begin position="162"/>
        <end position="182"/>
    </location>
</feature>
<feature type="topological domain" description="Cytoplasmic" evidence="2">
    <location>
        <begin position="183"/>
        <end position="206"/>
    </location>
</feature>
<feature type="sequence conflict" description="In Ref. 2; EE108821." evidence="3" ref="2">
    <original>HL</original>
    <variation>LP</variation>
    <location>
        <begin position="201"/>
        <end position="202"/>
    </location>
</feature>
<evidence type="ECO:0000250" key="1"/>
<evidence type="ECO:0000255" key="2"/>
<evidence type="ECO:0000305" key="3"/>
<accession>A7Q6G6</accession>
<accession>F6GXF1</accession>
<proteinExistence type="evidence at transcript level"/>